<protein>
    <recommendedName>
        <fullName>Serine/threonine-protein phosphatase PP2A-1 catalytic subunit</fullName>
        <ecNumber>3.1.3.16</ecNumber>
    </recommendedName>
</protein>
<dbReference type="EC" id="3.1.3.16"/>
<dbReference type="EMBL" id="Z26654">
    <property type="protein sequence ID" value="CAA81395.1"/>
    <property type="molecule type" value="mRNA"/>
</dbReference>
<dbReference type="SMR" id="P48577"/>
<dbReference type="GO" id="GO:0046872">
    <property type="term" value="F:metal ion binding"/>
    <property type="evidence" value="ECO:0007669"/>
    <property type="project" value="UniProtKB-KW"/>
</dbReference>
<dbReference type="GO" id="GO:0004722">
    <property type="term" value="F:protein serine/threonine phosphatase activity"/>
    <property type="evidence" value="ECO:0007669"/>
    <property type="project" value="UniProtKB-EC"/>
</dbReference>
<dbReference type="CDD" id="cd07415">
    <property type="entry name" value="MPP_PP2A_PP4_PP6"/>
    <property type="match status" value="1"/>
</dbReference>
<dbReference type="FunFam" id="3.60.21.10:FF:000003">
    <property type="entry name" value="Serine/threonine-protein phosphatase"/>
    <property type="match status" value="1"/>
</dbReference>
<dbReference type="Gene3D" id="3.60.21.10">
    <property type="match status" value="1"/>
</dbReference>
<dbReference type="InterPro" id="IPR004843">
    <property type="entry name" value="Calcineurin-like_PHP_ApaH"/>
</dbReference>
<dbReference type="InterPro" id="IPR029052">
    <property type="entry name" value="Metallo-depent_PP-like"/>
</dbReference>
<dbReference type="InterPro" id="IPR047129">
    <property type="entry name" value="PPA2-like"/>
</dbReference>
<dbReference type="InterPro" id="IPR006186">
    <property type="entry name" value="Ser/Thr-sp_prot-phosphatase"/>
</dbReference>
<dbReference type="PANTHER" id="PTHR45619">
    <property type="entry name" value="SERINE/THREONINE-PROTEIN PHOSPHATASE PP2A-RELATED"/>
    <property type="match status" value="1"/>
</dbReference>
<dbReference type="Pfam" id="PF00149">
    <property type="entry name" value="Metallophos"/>
    <property type="match status" value="1"/>
</dbReference>
<dbReference type="PRINTS" id="PR00114">
    <property type="entry name" value="STPHPHTASE"/>
</dbReference>
<dbReference type="SMART" id="SM00156">
    <property type="entry name" value="PP2Ac"/>
    <property type="match status" value="1"/>
</dbReference>
<dbReference type="SUPFAM" id="SSF56300">
    <property type="entry name" value="Metallo-dependent phosphatases"/>
    <property type="match status" value="1"/>
</dbReference>
<dbReference type="PROSITE" id="PS00125">
    <property type="entry name" value="SER_THR_PHOSPHATASE"/>
    <property type="match status" value="1"/>
</dbReference>
<accession>P48577</accession>
<comment type="catalytic activity">
    <reaction>
        <text>O-phospho-L-seryl-[protein] + H2O = L-seryl-[protein] + phosphate</text>
        <dbReference type="Rhea" id="RHEA:20629"/>
        <dbReference type="Rhea" id="RHEA-COMP:9863"/>
        <dbReference type="Rhea" id="RHEA-COMP:11604"/>
        <dbReference type="ChEBI" id="CHEBI:15377"/>
        <dbReference type="ChEBI" id="CHEBI:29999"/>
        <dbReference type="ChEBI" id="CHEBI:43474"/>
        <dbReference type="ChEBI" id="CHEBI:83421"/>
        <dbReference type="EC" id="3.1.3.16"/>
    </reaction>
</comment>
<comment type="catalytic activity">
    <reaction>
        <text>O-phospho-L-threonyl-[protein] + H2O = L-threonyl-[protein] + phosphate</text>
        <dbReference type="Rhea" id="RHEA:47004"/>
        <dbReference type="Rhea" id="RHEA-COMP:11060"/>
        <dbReference type="Rhea" id="RHEA-COMP:11605"/>
        <dbReference type="ChEBI" id="CHEBI:15377"/>
        <dbReference type="ChEBI" id="CHEBI:30013"/>
        <dbReference type="ChEBI" id="CHEBI:43474"/>
        <dbReference type="ChEBI" id="CHEBI:61977"/>
        <dbReference type="EC" id="3.1.3.16"/>
    </reaction>
</comment>
<comment type="cofactor">
    <cofactor evidence="1">
        <name>Mn(2+)</name>
        <dbReference type="ChEBI" id="CHEBI:29035"/>
    </cofactor>
    <text evidence="1">Binds 2 manganese ions per subunit.</text>
</comment>
<comment type="similarity">
    <text evidence="3">Belongs to the PPP phosphatase family. PP-2A subfamily.</text>
</comment>
<reference key="1">
    <citation type="journal article" date="1995" name="Eur. J. Cell Biol.">
        <title>Protein phosphatase 2A, a potential regulator of actin dynamics and actin-based organelle motility in the green alga Acetabularia.</title>
        <authorList>
            <person name="Menzel D."/>
            <person name="Vugrek O."/>
            <person name="Frank S."/>
            <person name="Elsner-Menzel C."/>
        </authorList>
    </citation>
    <scope>NUCLEOTIDE SEQUENCE [MRNA]</scope>
</reference>
<proteinExistence type="evidence at transcript level"/>
<sequence>MVVYKQLDEWIEHLMQCKPLPEENVKELVAKAREVFSNEKNVQPVKMPVTVCGDIHGQFHDMVELFKIGGTCPDTNYLFMGDYVDRGYNSVETVTLLVSLKVRYPERITILRGNHESRQITQVYGFYDECLRKYGNANVWQLFTDLFDFLPLTGLIENEVFCLHGGLSPALDTLDQIRELDRIQEVPHEGPMCDLLWSDPDERLGWGISPRGAGYTFGQDISEQFNVRNSLKLVARAHQLVMEGYNWSHEKNVVTIFSAPNYCYRCGNMAAIMEVAEGMDKGFQQFEPAPRRGAEGEVNRRTPDYFL</sequence>
<evidence type="ECO:0000250" key="1"/>
<evidence type="ECO:0000256" key="2">
    <source>
        <dbReference type="SAM" id="MobiDB-lite"/>
    </source>
</evidence>
<evidence type="ECO:0000305" key="3"/>
<name>PP2A_ACEPE</name>
<organism>
    <name type="scientific">Acetabularia peniculus</name>
    <name type="common">Green alga</name>
    <name type="synonym">Polyphysa peniculus</name>
    <dbReference type="NCBI Taxonomy" id="35862"/>
    <lineage>
        <taxon>Eukaryota</taxon>
        <taxon>Viridiplantae</taxon>
        <taxon>Chlorophyta</taxon>
        <taxon>Ulvophyceae</taxon>
        <taxon>TCBD clade</taxon>
        <taxon>Dasycladales</taxon>
        <taxon>Polyphysaceae</taxon>
        <taxon>Acetabularia</taxon>
    </lineage>
</organism>
<feature type="chain" id="PRO_0000058851" description="Serine/threonine-protein phosphatase PP2A-1 catalytic subunit">
    <location>
        <begin position="1"/>
        <end position="307"/>
    </location>
</feature>
<feature type="region of interest" description="Disordered" evidence="2">
    <location>
        <begin position="286"/>
        <end position="307"/>
    </location>
</feature>
<feature type="compositionally biased region" description="Basic and acidic residues" evidence="2">
    <location>
        <begin position="289"/>
        <end position="307"/>
    </location>
</feature>
<feature type="active site" description="Proton donor" evidence="1">
    <location>
        <position position="115"/>
    </location>
</feature>
<feature type="binding site" evidence="1">
    <location>
        <position position="54"/>
    </location>
    <ligand>
        <name>Mn(2+)</name>
        <dbReference type="ChEBI" id="CHEBI:29035"/>
        <label>1</label>
    </ligand>
</feature>
<feature type="binding site" evidence="1">
    <location>
        <position position="56"/>
    </location>
    <ligand>
        <name>Mn(2+)</name>
        <dbReference type="ChEBI" id="CHEBI:29035"/>
        <label>1</label>
    </ligand>
</feature>
<feature type="binding site" evidence="1">
    <location>
        <position position="82"/>
    </location>
    <ligand>
        <name>Mn(2+)</name>
        <dbReference type="ChEBI" id="CHEBI:29035"/>
        <label>1</label>
    </ligand>
</feature>
<feature type="binding site" evidence="1">
    <location>
        <position position="82"/>
    </location>
    <ligand>
        <name>Mn(2+)</name>
        <dbReference type="ChEBI" id="CHEBI:29035"/>
        <label>2</label>
    </ligand>
</feature>
<feature type="binding site" evidence="1">
    <location>
        <position position="114"/>
    </location>
    <ligand>
        <name>Mn(2+)</name>
        <dbReference type="ChEBI" id="CHEBI:29035"/>
        <label>2</label>
    </ligand>
</feature>
<feature type="binding site" evidence="1">
    <location>
        <position position="164"/>
    </location>
    <ligand>
        <name>Mn(2+)</name>
        <dbReference type="ChEBI" id="CHEBI:29035"/>
        <label>2</label>
    </ligand>
</feature>
<feature type="binding site" evidence="1">
    <location>
        <position position="238"/>
    </location>
    <ligand>
        <name>Mn(2+)</name>
        <dbReference type="ChEBI" id="CHEBI:29035"/>
        <label>2</label>
    </ligand>
</feature>
<keyword id="KW-0378">Hydrolase</keyword>
<keyword id="KW-0464">Manganese</keyword>
<keyword id="KW-0479">Metal-binding</keyword>
<keyword id="KW-0904">Protein phosphatase</keyword>